<proteinExistence type="evidence at protein level"/>
<sequence>MAGRGKTLGSGVAKKSTSRSSKAGLQFPVGRIARFLKNGKYATRVGAGAPVYLAAVLEYLAAEVLELAGNAARDNKKTRIVPRHIQLAVRNDEELSKLLGDVTIANGGVMPNIHSLLLPKKAGASKPSADED</sequence>
<accession>Q9LHQ5</accession>
<organism>
    <name type="scientific">Arabidopsis thaliana</name>
    <name type="common">Mouse-ear cress</name>
    <dbReference type="NCBI Taxonomy" id="3702"/>
    <lineage>
        <taxon>Eukaryota</taxon>
        <taxon>Viridiplantae</taxon>
        <taxon>Streptophyta</taxon>
        <taxon>Embryophyta</taxon>
        <taxon>Tracheophyta</taxon>
        <taxon>Spermatophyta</taxon>
        <taxon>Magnoliopsida</taxon>
        <taxon>eudicotyledons</taxon>
        <taxon>Gunneridae</taxon>
        <taxon>Pentapetalae</taxon>
        <taxon>rosids</taxon>
        <taxon>malvids</taxon>
        <taxon>Brassicales</taxon>
        <taxon>Brassicaceae</taxon>
        <taxon>Camelineae</taxon>
        <taxon>Arabidopsis</taxon>
    </lineage>
</organism>
<comment type="function">
    <text>Core component of nucleosome. Nucleosomes wrap and compact DNA into chromatin, limiting DNA accessibility to the cellular machineries which require DNA as a template. Histones thereby play a central role in transcription regulation, DNA repair, DNA replication and chromosomal stability. DNA accessibility is regulated via a complex set of post-translational modifications of histones, also called histone code, and nucleosome remodeling.</text>
</comment>
<comment type="subunit">
    <text>The nucleosome is a histone octamer containing two molecules each of H2A, H2B, H3 and H4 assembled in one H3-H4 heterotetramer and two H2A-H2B heterodimers. The octamer wraps approximately 147 bp of DNA.</text>
</comment>
<comment type="subcellular location">
    <subcellularLocation>
        <location evidence="1">Nucleus</location>
    </subcellularLocation>
    <subcellularLocation>
        <location evidence="1">Chromosome</location>
    </subcellularLocation>
</comment>
<comment type="tissue specificity">
    <text evidence="2">Expressed mainly in non-dividing tissues of the plant. Also found in meristems and dividing cells.</text>
</comment>
<comment type="PTM">
    <text>Not ubiquitinated.</text>
</comment>
<comment type="similarity">
    <text evidence="3">Belongs to the histone H2A family.</text>
</comment>
<protein>
    <recommendedName>
        <fullName>Probable histone H2A.2</fullName>
    </recommendedName>
    <alternativeName>
        <fullName>HTA13</fullName>
    </alternativeName>
</protein>
<evidence type="ECO:0000250" key="1"/>
<evidence type="ECO:0000269" key="2">
    <source>
    </source>
</evidence>
<evidence type="ECO:0000305" key="3"/>
<evidence type="ECO:0007829" key="4">
    <source>
        <dbReference type="PDB" id="8J91"/>
    </source>
</evidence>
<feature type="chain" id="PRO_0000055200" description="Probable histone H2A.2">
    <location>
        <begin position="1"/>
        <end position="132"/>
    </location>
</feature>
<feature type="helix" evidence="4">
    <location>
        <begin position="19"/>
        <end position="23"/>
    </location>
</feature>
<feature type="helix" evidence="4">
    <location>
        <begin position="29"/>
        <end position="37"/>
    </location>
</feature>
<feature type="strand" evidence="4">
    <location>
        <begin position="43"/>
        <end position="45"/>
    </location>
</feature>
<feature type="strand" evidence="4">
    <location>
        <begin position="47"/>
        <end position="49"/>
    </location>
</feature>
<feature type="helix" evidence="4">
    <location>
        <begin position="50"/>
        <end position="53"/>
    </location>
</feature>
<feature type="turn" evidence="4">
    <location>
        <begin position="54"/>
        <end position="58"/>
    </location>
</feature>
<feature type="helix" evidence="4">
    <location>
        <begin position="59"/>
        <end position="74"/>
    </location>
</feature>
<feature type="strand" evidence="4">
    <location>
        <begin position="78"/>
        <end position="80"/>
    </location>
</feature>
<feature type="helix" evidence="4">
    <location>
        <begin position="82"/>
        <end position="91"/>
    </location>
</feature>
<feature type="helix" evidence="4">
    <location>
        <begin position="93"/>
        <end position="99"/>
    </location>
</feature>
<feature type="strand" evidence="4">
    <location>
        <begin position="103"/>
        <end position="105"/>
    </location>
</feature>
<gene>
    <name type="ordered locus">At3g20670</name>
    <name type="ORF">F3H11.6</name>
</gene>
<keyword id="KW-0002">3D-structure</keyword>
<keyword id="KW-0158">Chromosome</keyword>
<keyword id="KW-0238">DNA-binding</keyword>
<keyword id="KW-0544">Nucleosome core</keyword>
<keyword id="KW-0539">Nucleus</keyword>
<keyword id="KW-1185">Reference proteome</keyword>
<name>H2A2_ARATH</name>
<dbReference type="EMBL" id="AP002034">
    <property type="protein sequence ID" value="BAB02243.1"/>
    <property type="molecule type" value="Genomic_DNA"/>
</dbReference>
<dbReference type="EMBL" id="CP002686">
    <property type="protein sequence ID" value="AEE76410.1"/>
    <property type="molecule type" value="Genomic_DNA"/>
</dbReference>
<dbReference type="EMBL" id="AY045967">
    <property type="protein sequence ID" value="AAK76641.1"/>
    <property type="molecule type" value="mRNA"/>
</dbReference>
<dbReference type="EMBL" id="AY079320">
    <property type="protein sequence ID" value="AAL85051.1"/>
    <property type="molecule type" value="mRNA"/>
</dbReference>
<dbReference type="EMBL" id="AY085312">
    <property type="protein sequence ID" value="AAM62543.1"/>
    <property type="molecule type" value="mRNA"/>
</dbReference>
<dbReference type="PDB" id="8J91">
    <property type="method" value="EM"/>
    <property type="resolution" value="2.90 A"/>
    <property type="chains" value="C/G=1-132"/>
</dbReference>
<dbReference type="PDBsum" id="8J91"/>
<dbReference type="EMDB" id="EMD-36084"/>
<dbReference type="SMR" id="Q9LHQ5"/>
<dbReference type="BioGRID" id="6946">
    <property type="interactions" value="7"/>
</dbReference>
<dbReference type="FunCoup" id="Q9LHQ5">
    <property type="interactions" value="2384"/>
</dbReference>
<dbReference type="IntAct" id="Q9LHQ5">
    <property type="interactions" value="7"/>
</dbReference>
<dbReference type="STRING" id="3702.Q9LHQ5"/>
<dbReference type="PaxDb" id="3702-AT3G20670.1"/>
<dbReference type="ProteomicsDB" id="247209"/>
<dbReference type="EnsemblPlants" id="AT3G20670.1">
    <property type="protein sequence ID" value="AT3G20670.1"/>
    <property type="gene ID" value="AT3G20670"/>
</dbReference>
<dbReference type="Gramene" id="AT3G20670.1">
    <property type="protein sequence ID" value="AT3G20670.1"/>
    <property type="gene ID" value="AT3G20670"/>
</dbReference>
<dbReference type="KEGG" id="ath:AT3G20670"/>
<dbReference type="Araport" id="AT3G20670"/>
<dbReference type="TAIR" id="AT3G20670">
    <property type="gene designation" value="HTA13"/>
</dbReference>
<dbReference type="eggNOG" id="KOG1756">
    <property type="taxonomic scope" value="Eukaryota"/>
</dbReference>
<dbReference type="HOGENOM" id="CLU_062828_3_0_1"/>
<dbReference type="InParanoid" id="Q9LHQ5"/>
<dbReference type="OMA" id="KANSGRD"/>
<dbReference type="OrthoDB" id="1105515at2759"/>
<dbReference type="PhylomeDB" id="Q9LHQ5"/>
<dbReference type="CD-CODE" id="4299E36E">
    <property type="entry name" value="Nucleolus"/>
</dbReference>
<dbReference type="PRO" id="PR:Q9LHQ5"/>
<dbReference type="Proteomes" id="UP000006548">
    <property type="component" value="Chromosome 3"/>
</dbReference>
<dbReference type="ExpressionAtlas" id="Q9LHQ5">
    <property type="expression patterns" value="baseline and differential"/>
</dbReference>
<dbReference type="GO" id="GO:0005829">
    <property type="term" value="C:cytosol"/>
    <property type="evidence" value="ECO:0007005"/>
    <property type="project" value="TAIR"/>
</dbReference>
<dbReference type="GO" id="GO:0000786">
    <property type="term" value="C:nucleosome"/>
    <property type="evidence" value="ECO:0007669"/>
    <property type="project" value="UniProtKB-KW"/>
</dbReference>
<dbReference type="GO" id="GO:0005634">
    <property type="term" value="C:nucleus"/>
    <property type="evidence" value="ECO:0007669"/>
    <property type="project" value="UniProtKB-SubCell"/>
</dbReference>
<dbReference type="GO" id="GO:0003677">
    <property type="term" value="F:DNA binding"/>
    <property type="evidence" value="ECO:0007669"/>
    <property type="project" value="UniProtKB-KW"/>
</dbReference>
<dbReference type="GO" id="GO:0046982">
    <property type="term" value="F:protein heterodimerization activity"/>
    <property type="evidence" value="ECO:0007669"/>
    <property type="project" value="InterPro"/>
</dbReference>
<dbReference type="GO" id="GO:0030527">
    <property type="term" value="F:structural constituent of chromatin"/>
    <property type="evidence" value="ECO:0007669"/>
    <property type="project" value="InterPro"/>
</dbReference>
<dbReference type="CDD" id="cd00074">
    <property type="entry name" value="HFD_H2A"/>
    <property type="match status" value="1"/>
</dbReference>
<dbReference type="FunFam" id="1.10.20.10:FF:000009">
    <property type="entry name" value="Histone H2A"/>
    <property type="match status" value="1"/>
</dbReference>
<dbReference type="Gene3D" id="1.10.20.10">
    <property type="entry name" value="Histone, subunit A"/>
    <property type="match status" value="1"/>
</dbReference>
<dbReference type="InterPro" id="IPR009072">
    <property type="entry name" value="Histone-fold"/>
</dbReference>
<dbReference type="InterPro" id="IPR002119">
    <property type="entry name" value="Histone_H2A"/>
</dbReference>
<dbReference type="InterPro" id="IPR007125">
    <property type="entry name" value="Histone_H2A/H2B/H3"/>
</dbReference>
<dbReference type="InterPro" id="IPR032454">
    <property type="entry name" value="Histone_H2A_C"/>
</dbReference>
<dbReference type="InterPro" id="IPR032458">
    <property type="entry name" value="Histone_H2A_CS"/>
</dbReference>
<dbReference type="PANTHER" id="PTHR23430">
    <property type="entry name" value="HISTONE H2A"/>
    <property type="match status" value="1"/>
</dbReference>
<dbReference type="Pfam" id="PF00125">
    <property type="entry name" value="Histone"/>
    <property type="match status" value="1"/>
</dbReference>
<dbReference type="Pfam" id="PF16211">
    <property type="entry name" value="Histone_H2A_C"/>
    <property type="match status" value="1"/>
</dbReference>
<dbReference type="PRINTS" id="PR00620">
    <property type="entry name" value="HISTONEH2A"/>
</dbReference>
<dbReference type="SMART" id="SM00414">
    <property type="entry name" value="H2A"/>
    <property type="match status" value="1"/>
</dbReference>
<dbReference type="SUPFAM" id="SSF47113">
    <property type="entry name" value="Histone-fold"/>
    <property type="match status" value="1"/>
</dbReference>
<dbReference type="PROSITE" id="PS00046">
    <property type="entry name" value="HISTONE_H2A"/>
    <property type="match status" value="1"/>
</dbReference>
<reference key="1">
    <citation type="journal article" date="2000" name="DNA Res.">
        <title>Structural analysis of Arabidopsis thaliana chromosome 3. II. Sequence features of the 4,251,695 bp regions covered by 90 P1, TAC and BAC clones.</title>
        <authorList>
            <person name="Kaneko T."/>
            <person name="Katoh T."/>
            <person name="Sato S."/>
            <person name="Nakamura Y."/>
            <person name="Asamizu E."/>
            <person name="Tabata S."/>
        </authorList>
    </citation>
    <scope>NUCLEOTIDE SEQUENCE [LARGE SCALE GENOMIC DNA]</scope>
    <source>
        <strain>cv. Columbia</strain>
    </source>
</reference>
<reference key="2">
    <citation type="journal article" date="2017" name="Plant J.">
        <title>Araport11: a complete reannotation of the Arabidopsis thaliana reference genome.</title>
        <authorList>
            <person name="Cheng C.Y."/>
            <person name="Krishnakumar V."/>
            <person name="Chan A.P."/>
            <person name="Thibaud-Nissen F."/>
            <person name="Schobel S."/>
            <person name="Town C.D."/>
        </authorList>
    </citation>
    <scope>GENOME REANNOTATION</scope>
    <source>
        <strain>cv. Columbia</strain>
    </source>
</reference>
<reference key="3">
    <citation type="journal article" date="2003" name="Science">
        <title>Empirical analysis of transcriptional activity in the Arabidopsis genome.</title>
        <authorList>
            <person name="Yamada K."/>
            <person name="Lim J."/>
            <person name="Dale J.M."/>
            <person name="Chen H."/>
            <person name="Shinn P."/>
            <person name="Palm C.J."/>
            <person name="Southwick A.M."/>
            <person name="Wu H.C."/>
            <person name="Kim C.J."/>
            <person name="Nguyen M."/>
            <person name="Pham P.K."/>
            <person name="Cheuk R.F."/>
            <person name="Karlin-Newmann G."/>
            <person name="Liu S.X."/>
            <person name="Lam B."/>
            <person name="Sakano H."/>
            <person name="Wu T."/>
            <person name="Yu G."/>
            <person name="Miranda M."/>
            <person name="Quach H.L."/>
            <person name="Tripp M."/>
            <person name="Chang C.H."/>
            <person name="Lee J.M."/>
            <person name="Toriumi M.J."/>
            <person name="Chan M.M."/>
            <person name="Tang C.C."/>
            <person name="Onodera C.S."/>
            <person name="Deng J.M."/>
            <person name="Akiyama K."/>
            <person name="Ansari Y."/>
            <person name="Arakawa T."/>
            <person name="Banh J."/>
            <person name="Banno F."/>
            <person name="Bowser L."/>
            <person name="Brooks S.Y."/>
            <person name="Carninci P."/>
            <person name="Chao Q."/>
            <person name="Choy N."/>
            <person name="Enju A."/>
            <person name="Goldsmith A.D."/>
            <person name="Gurjal M."/>
            <person name="Hansen N.F."/>
            <person name="Hayashizaki Y."/>
            <person name="Johnson-Hopson C."/>
            <person name="Hsuan V.W."/>
            <person name="Iida K."/>
            <person name="Karnes M."/>
            <person name="Khan S."/>
            <person name="Koesema E."/>
            <person name="Ishida J."/>
            <person name="Jiang P.X."/>
            <person name="Jones T."/>
            <person name="Kawai J."/>
            <person name="Kamiya A."/>
            <person name="Meyers C."/>
            <person name="Nakajima M."/>
            <person name="Narusaka M."/>
            <person name="Seki M."/>
            <person name="Sakurai T."/>
            <person name="Satou M."/>
            <person name="Tamse R."/>
            <person name="Vaysberg M."/>
            <person name="Wallender E.K."/>
            <person name="Wong C."/>
            <person name="Yamamura Y."/>
            <person name="Yuan S."/>
            <person name="Shinozaki K."/>
            <person name="Davis R.W."/>
            <person name="Theologis A."/>
            <person name="Ecker J.R."/>
        </authorList>
    </citation>
    <scope>NUCLEOTIDE SEQUENCE [LARGE SCALE MRNA]</scope>
    <source>
        <strain>cv. Columbia</strain>
    </source>
</reference>
<reference key="4">
    <citation type="submission" date="2002-03" db="EMBL/GenBank/DDBJ databases">
        <title>Full-length cDNA from Arabidopsis thaliana.</title>
        <authorList>
            <person name="Brover V.V."/>
            <person name="Troukhan M.E."/>
            <person name="Alexandrov N.A."/>
            <person name="Lu Y.-P."/>
            <person name="Flavell R.B."/>
            <person name="Feldmann K.A."/>
        </authorList>
    </citation>
    <scope>NUCLEOTIDE SEQUENCE [LARGE SCALE MRNA]</scope>
</reference>
<reference key="5">
    <citation type="journal article" date="2006" name="Plant Cell">
        <title>Constitutive expression exposes functional redundancy between the Arabidopsis histone H2A gene HTA1 and other H2A gene family members.</title>
        <authorList>
            <person name="Yi H."/>
            <person name="Sardesai N."/>
            <person name="Fujinuma T."/>
            <person name="Chan C.-W."/>
            <person name="Veena X."/>
            <person name="Gelvin S.B."/>
        </authorList>
    </citation>
    <scope>TISSUE SPECIFICITY</scope>
    <scope>NOMENCLATURE</scope>
</reference>
<reference key="6">
    <citation type="journal article" date="2007" name="Nature">
        <title>Control of DNA methylation and heterochromatic silencing by histone H2B deubiquitination.</title>
        <authorList>
            <person name="Sridhar V.V."/>
            <person name="Kapoor A."/>
            <person name="Zhang K."/>
            <person name="Zhu J."/>
            <person name="Zhou T."/>
            <person name="Hasegawa P.M."/>
            <person name="Bressan R.A."/>
            <person name="Zhu J.-K."/>
        </authorList>
    </citation>
    <scope>LACK OF UBIQUITINATION</scope>
    <scope>IDENTIFICATION BY MASS SPECTROMETRY</scope>
</reference>